<evidence type="ECO:0000250" key="1"/>
<evidence type="ECO:0000255" key="2"/>
<evidence type="ECO:0000305" key="3"/>
<sequence length="612" mass="66949">MHPTTLMYTSSLLLMFAVLLYPLLVTFTSLPLNNDWASSHAKTAVKSAFLISLAPLSLFLSTGMEAVTSSWTWMVTTTLDITLSFKFDHYSIIFIPIALYVTWSILEFATWYMHSDPFMNRFFKYLLTFLVAMLILVSANNLFQLFIGWEGVGIMSFLLIGWWHGRADANTAALQAVLYNRVGDIGLILGMAWLATNVNSWDIQQMFILSKNLDMTLPLLGLILAATGKSAQFGLHPWLPAAMEGPTPVSALLHSSTMVVAGIFLLIRMSPLMENNQTALTLCLCLGALTTMFTATCALTQNDIKKIVAFSTSSQLGLMMVTIGLNQPQLAFLHICTHAFFKAMLFLCSGSVIHSLNDEQDIRKMGGLHHLAPFTSSCLTVGSLALTGTPFLAGFFSKDAIIEALNTSHVNAWALTLTLIATSFTAIYSLRVIFFVTMGTPRFLPLSPINENNPAVINPLKRLAWGGIFGGLLVMLNINLFKTPVLTMPAELKLAALAVSILGLLTALELATLTSKQFKVTPLRTPHHFSTSLGFVPAIIHRQIPQLSLLLGQKIASQMVDQTWLEKTGPKAIANATTPLASATSNMQQGLIKTYLTLFLMTLVLVTLISAT</sequence>
<geneLocation type="mitochondrion"/>
<feature type="chain" id="PRO_0000118096" description="NADH-ubiquinone oxidoreductase chain 5">
    <location>
        <begin position="1"/>
        <end position="612"/>
    </location>
</feature>
<feature type="transmembrane region" description="Helical" evidence="2">
    <location>
        <begin position="12"/>
        <end position="32"/>
    </location>
</feature>
<feature type="transmembrane region" description="Helical" evidence="2">
    <location>
        <begin position="48"/>
        <end position="68"/>
    </location>
</feature>
<feature type="transmembrane region" description="Helical" evidence="2">
    <location>
        <begin position="92"/>
        <end position="112"/>
    </location>
</feature>
<feature type="transmembrane region" description="Helical" evidence="2">
    <location>
        <begin position="117"/>
        <end position="137"/>
    </location>
</feature>
<feature type="transmembrane region" description="Helical" evidence="2">
    <location>
        <begin position="142"/>
        <end position="162"/>
    </location>
</feature>
<feature type="transmembrane region" description="Helical" evidence="2">
    <location>
        <begin position="176"/>
        <end position="196"/>
    </location>
</feature>
<feature type="transmembrane region" description="Helical" evidence="2">
    <location>
        <begin position="247"/>
        <end position="267"/>
    </location>
</feature>
<feature type="transmembrane region" description="Helical" evidence="2">
    <location>
        <begin position="279"/>
        <end position="299"/>
    </location>
</feature>
<feature type="transmembrane region" description="Helical" evidence="2">
    <location>
        <begin position="307"/>
        <end position="327"/>
    </location>
</feature>
<feature type="transmembrane region" description="Helical" evidence="2">
    <location>
        <begin position="330"/>
        <end position="350"/>
    </location>
</feature>
<feature type="transmembrane region" description="Helical" evidence="2">
    <location>
        <begin position="376"/>
        <end position="396"/>
    </location>
</feature>
<feature type="transmembrane region" description="Helical" evidence="2">
    <location>
        <begin position="419"/>
        <end position="439"/>
    </location>
</feature>
<feature type="transmembrane region" description="Helical" evidence="2">
    <location>
        <begin position="463"/>
        <end position="483"/>
    </location>
</feature>
<feature type="transmembrane region" description="Helical" evidence="2">
    <location>
        <begin position="494"/>
        <end position="514"/>
    </location>
</feature>
<feature type="transmembrane region" description="Helical" evidence="2">
    <location>
        <begin position="591"/>
        <end position="611"/>
    </location>
</feature>
<gene>
    <name type="primary">MT-ND5</name>
    <name type="synonym">MTND5</name>
    <name type="synonym">NADH5</name>
    <name type="synonym">ND5</name>
</gene>
<organism>
    <name type="scientific">Gadus morhua</name>
    <name type="common">Atlantic cod</name>
    <dbReference type="NCBI Taxonomy" id="8049"/>
    <lineage>
        <taxon>Eukaryota</taxon>
        <taxon>Metazoa</taxon>
        <taxon>Chordata</taxon>
        <taxon>Craniata</taxon>
        <taxon>Vertebrata</taxon>
        <taxon>Euteleostomi</taxon>
        <taxon>Actinopterygii</taxon>
        <taxon>Neopterygii</taxon>
        <taxon>Teleostei</taxon>
        <taxon>Neoteleostei</taxon>
        <taxon>Acanthomorphata</taxon>
        <taxon>Zeiogadaria</taxon>
        <taxon>Gadariae</taxon>
        <taxon>Gadiformes</taxon>
        <taxon>Gadoidei</taxon>
        <taxon>Gadidae</taxon>
        <taxon>Gadus</taxon>
    </lineage>
</organism>
<comment type="function">
    <text evidence="1">Core subunit of the mitochondrial membrane respiratory chain NADH dehydrogenase (Complex I) that is believed to belong to the minimal assembly required for catalysis. Complex I functions in the transfer of electrons from NADH to the respiratory chain. The immediate electron acceptor for the enzyme is believed to be ubiquinone (By similarity).</text>
</comment>
<comment type="catalytic activity">
    <reaction>
        <text>a ubiquinone + NADH + 5 H(+)(in) = a ubiquinol + NAD(+) + 4 H(+)(out)</text>
        <dbReference type="Rhea" id="RHEA:29091"/>
        <dbReference type="Rhea" id="RHEA-COMP:9565"/>
        <dbReference type="Rhea" id="RHEA-COMP:9566"/>
        <dbReference type="ChEBI" id="CHEBI:15378"/>
        <dbReference type="ChEBI" id="CHEBI:16389"/>
        <dbReference type="ChEBI" id="CHEBI:17976"/>
        <dbReference type="ChEBI" id="CHEBI:57540"/>
        <dbReference type="ChEBI" id="CHEBI:57945"/>
        <dbReference type="EC" id="7.1.1.2"/>
    </reaction>
</comment>
<comment type="subcellular location">
    <subcellularLocation>
        <location evidence="1">Mitochondrion inner membrane</location>
        <topology evidence="1">Multi-pass membrane protein</topology>
    </subcellularLocation>
</comment>
<comment type="similarity">
    <text evidence="3">Belongs to the complex I subunit 5 family.</text>
</comment>
<protein>
    <recommendedName>
        <fullName>NADH-ubiquinone oxidoreductase chain 5</fullName>
        <ecNumber>7.1.1.2</ecNumber>
    </recommendedName>
    <alternativeName>
        <fullName>NADH dehydrogenase subunit 5</fullName>
    </alternativeName>
</protein>
<keyword id="KW-0249">Electron transport</keyword>
<keyword id="KW-0472">Membrane</keyword>
<keyword id="KW-0496">Mitochondrion</keyword>
<keyword id="KW-0999">Mitochondrion inner membrane</keyword>
<keyword id="KW-0520">NAD</keyword>
<keyword id="KW-1185">Reference proteome</keyword>
<keyword id="KW-0679">Respiratory chain</keyword>
<keyword id="KW-1278">Translocase</keyword>
<keyword id="KW-0812">Transmembrane</keyword>
<keyword id="KW-1133">Transmembrane helix</keyword>
<keyword id="KW-0813">Transport</keyword>
<keyword id="KW-0830">Ubiquinone</keyword>
<reference key="1">
    <citation type="journal article" date="1996" name="Mol. Mar. Biol. Biotechnol.">
        <title>The complete mitochondrial DNA sequence of Atlantic cod (Gadus morhua): relevance to taxonomic studies among codfishes.</title>
        <authorList>
            <person name="Johansen S."/>
            <person name="Bakke I."/>
        </authorList>
    </citation>
    <scope>NUCLEOTIDE SEQUENCE [GENOMIC DNA]</scope>
    <source>
        <strain>Norwegian coastal 1</strain>
    </source>
</reference>
<dbReference type="EC" id="7.1.1.2"/>
<dbReference type="EMBL" id="X99772">
    <property type="protein sequence ID" value="CAA68115.1"/>
    <property type="molecule type" value="Genomic_DNA"/>
</dbReference>
<dbReference type="PIR" id="T11830">
    <property type="entry name" value="T11830"/>
</dbReference>
<dbReference type="RefSeq" id="NP_007819.1">
    <property type="nucleotide sequence ID" value="NC_002081.1"/>
</dbReference>
<dbReference type="SMR" id="P55782"/>
<dbReference type="GeneID" id="808457"/>
<dbReference type="CTD" id="4540"/>
<dbReference type="OrthoDB" id="10069788at2759"/>
<dbReference type="Proteomes" id="UP000694546">
    <property type="component" value="Unplaced"/>
</dbReference>
<dbReference type="GO" id="GO:0005743">
    <property type="term" value="C:mitochondrial inner membrane"/>
    <property type="evidence" value="ECO:0007669"/>
    <property type="project" value="UniProtKB-SubCell"/>
</dbReference>
<dbReference type="GO" id="GO:0008137">
    <property type="term" value="F:NADH dehydrogenase (ubiquinone) activity"/>
    <property type="evidence" value="ECO:0007669"/>
    <property type="project" value="UniProtKB-EC"/>
</dbReference>
<dbReference type="GO" id="GO:0042773">
    <property type="term" value="P:ATP synthesis coupled electron transport"/>
    <property type="evidence" value="ECO:0007669"/>
    <property type="project" value="InterPro"/>
</dbReference>
<dbReference type="GO" id="GO:0015990">
    <property type="term" value="P:electron transport coupled proton transport"/>
    <property type="evidence" value="ECO:0007669"/>
    <property type="project" value="TreeGrafter"/>
</dbReference>
<dbReference type="InterPro" id="IPR010934">
    <property type="entry name" value="NADH_DH_su5_C"/>
</dbReference>
<dbReference type="InterPro" id="IPR018393">
    <property type="entry name" value="NADHpl_OxRdtase_5_subgr"/>
</dbReference>
<dbReference type="InterPro" id="IPR001750">
    <property type="entry name" value="ND/Mrp_TM"/>
</dbReference>
<dbReference type="InterPro" id="IPR003945">
    <property type="entry name" value="NU5C-like"/>
</dbReference>
<dbReference type="InterPro" id="IPR001516">
    <property type="entry name" value="Proton_antipo_N"/>
</dbReference>
<dbReference type="NCBIfam" id="TIGR01974">
    <property type="entry name" value="NDH_I_L"/>
    <property type="match status" value="1"/>
</dbReference>
<dbReference type="PANTHER" id="PTHR42829">
    <property type="entry name" value="NADH-UBIQUINONE OXIDOREDUCTASE CHAIN 5"/>
    <property type="match status" value="1"/>
</dbReference>
<dbReference type="PANTHER" id="PTHR42829:SF2">
    <property type="entry name" value="NADH-UBIQUINONE OXIDOREDUCTASE CHAIN 5"/>
    <property type="match status" value="1"/>
</dbReference>
<dbReference type="Pfam" id="PF06455">
    <property type="entry name" value="NADH5_C"/>
    <property type="match status" value="1"/>
</dbReference>
<dbReference type="Pfam" id="PF00361">
    <property type="entry name" value="Proton_antipo_M"/>
    <property type="match status" value="1"/>
</dbReference>
<dbReference type="Pfam" id="PF00662">
    <property type="entry name" value="Proton_antipo_N"/>
    <property type="match status" value="1"/>
</dbReference>
<dbReference type="PRINTS" id="PR01434">
    <property type="entry name" value="NADHDHGNASE5"/>
</dbReference>
<proteinExistence type="inferred from homology"/>
<accession>P55782</accession>
<name>NU5M_GADMO</name>